<dbReference type="EC" id="2.3.1.89" evidence="1"/>
<dbReference type="EMBL" id="CP000923">
    <property type="protein sequence ID" value="ABY93458.1"/>
    <property type="molecule type" value="Genomic_DNA"/>
</dbReference>
<dbReference type="RefSeq" id="WP_003866980.1">
    <property type="nucleotide sequence ID" value="NC_010320.1"/>
</dbReference>
<dbReference type="SMR" id="B0K4I5"/>
<dbReference type="KEGG" id="tex:Teth514_2186"/>
<dbReference type="HOGENOM" id="CLU_103751_0_0_9"/>
<dbReference type="UniPathway" id="UPA00034">
    <property type="reaction ID" value="UER00022"/>
</dbReference>
<dbReference type="Proteomes" id="UP000002155">
    <property type="component" value="Chromosome"/>
</dbReference>
<dbReference type="GO" id="GO:0047200">
    <property type="term" value="F:tetrahydrodipicolinate N-acetyltransferase activity"/>
    <property type="evidence" value="ECO:0007669"/>
    <property type="project" value="UniProtKB-EC"/>
</dbReference>
<dbReference type="GO" id="GO:0019877">
    <property type="term" value="P:diaminopimelate biosynthetic process"/>
    <property type="evidence" value="ECO:0007669"/>
    <property type="project" value="UniProtKB-UniRule"/>
</dbReference>
<dbReference type="GO" id="GO:0009089">
    <property type="term" value="P:lysine biosynthetic process via diaminopimelate"/>
    <property type="evidence" value="ECO:0007669"/>
    <property type="project" value="UniProtKB-UniRule"/>
</dbReference>
<dbReference type="CDD" id="cd03350">
    <property type="entry name" value="LbH_THP_succinylT"/>
    <property type="match status" value="1"/>
</dbReference>
<dbReference type="Gene3D" id="2.160.10.10">
    <property type="entry name" value="Hexapeptide repeat proteins"/>
    <property type="match status" value="1"/>
</dbReference>
<dbReference type="Gene3D" id="3.30.70.250">
    <property type="entry name" value="Malonyl-CoA ACP transacylase, ACP-binding"/>
    <property type="match status" value="1"/>
</dbReference>
<dbReference type="HAMAP" id="MF_01691">
    <property type="entry name" value="DapH"/>
    <property type="match status" value="1"/>
</dbReference>
<dbReference type="InterPro" id="IPR019873">
    <property type="entry name" value="DapH"/>
</dbReference>
<dbReference type="InterPro" id="IPR013710">
    <property type="entry name" value="DapH_N"/>
</dbReference>
<dbReference type="InterPro" id="IPR001451">
    <property type="entry name" value="Hexapep"/>
</dbReference>
<dbReference type="InterPro" id="IPR018357">
    <property type="entry name" value="Hexapep_transf_CS"/>
</dbReference>
<dbReference type="InterPro" id="IPR050179">
    <property type="entry name" value="Trans_hexapeptide_repeat"/>
</dbReference>
<dbReference type="InterPro" id="IPR011004">
    <property type="entry name" value="Trimer_LpxA-like_sf"/>
</dbReference>
<dbReference type="NCBIfam" id="TIGR03532">
    <property type="entry name" value="DapD_Ac"/>
    <property type="match status" value="1"/>
</dbReference>
<dbReference type="PANTHER" id="PTHR43300:SF10">
    <property type="entry name" value="2,3,4,5-TETRAHYDROPYRIDINE-2,6-DICARBOXYLATE N-ACETYLTRANSFERASE"/>
    <property type="match status" value="1"/>
</dbReference>
<dbReference type="PANTHER" id="PTHR43300">
    <property type="entry name" value="ACETYLTRANSFERASE"/>
    <property type="match status" value="1"/>
</dbReference>
<dbReference type="Pfam" id="PF08503">
    <property type="entry name" value="DapH_N"/>
    <property type="match status" value="1"/>
</dbReference>
<dbReference type="Pfam" id="PF00132">
    <property type="entry name" value="Hexapep"/>
    <property type="match status" value="1"/>
</dbReference>
<dbReference type="Pfam" id="PF14602">
    <property type="entry name" value="Hexapep_2"/>
    <property type="match status" value="1"/>
</dbReference>
<dbReference type="SUPFAM" id="SSF51161">
    <property type="entry name" value="Trimeric LpxA-like enzymes"/>
    <property type="match status" value="1"/>
</dbReference>
<dbReference type="PROSITE" id="PS00101">
    <property type="entry name" value="HEXAPEP_TRANSFERASES"/>
    <property type="match status" value="1"/>
</dbReference>
<comment type="function">
    <text evidence="1">Catalyzes the transfer of an acetyl group from acetyl-CoA to tetrahydrodipicolinate.</text>
</comment>
<comment type="catalytic activity">
    <reaction evidence="1">
        <text>(S)-2,3,4,5-tetrahydrodipicolinate + acetyl-CoA + H2O = L-2-acetamido-6-oxoheptanedioate + CoA</text>
        <dbReference type="Rhea" id="RHEA:13085"/>
        <dbReference type="ChEBI" id="CHEBI:15377"/>
        <dbReference type="ChEBI" id="CHEBI:16845"/>
        <dbReference type="ChEBI" id="CHEBI:57287"/>
        <dbReference type="ChEBI" id="CHEBI:57288"/>
        <dbReference type="ChEBI" id="CHEBI:58117"/>
        <dbReference type="EC" id="2.3.1.89"/>
    </reaction>
</comment>
<comment type="pathway">
    <text evidence="1">Amino-acid biosynthesis; L-lysine biosynthesis via DAP pathway; LL-2,6-diaminopimelate from (S)-tetrahydrodipicolinate (acetylase route): step 1/3.</text>
</comment>
<comment type="similarity">
    <text evidence="1">Belongs to the transferase hexapeptide repeat family. DapH subfamily.</text>
</comment>
<evidence type="ECO:0000255" key="1">
    <source>
        <dbReference type="HAMAP-Rule" id="MF_01691"/>
    </source>
</evidence>
<keyword id="KW-0012">Acyltransferase</keyword>
<keyword id="KW-0028">Amino-acid biosynthesis</keyword>
<keyword id="KW-0220">Diaminopimelate biosynthesis</keyword>
<keyword id="KW-0457">Lysine biosynthesis</keyword>
<keyword id="KW-0677">Repeat</keyword>
<keyword id="KW-0808">Transferase</keyword>
<proteinExistence type="inferred from homology"/>
<organism>
    <name type="scientific">Thermoanaerobacter sp. (strain X514)</name>
    <dbReference type="NCBI Taxonomy" id="399726"/>
    <lineage>
        <taxon>Bacteria</taxon>
        <taxon>Bacillati</taxon>
        <taxon>Bacillota</taxon>
        <taxon>Clostridia</taxon>
        <taxon>Thermoanaerobacterales</taxon>
        <taxon>Thermoanaerobacteraceae</taxon>
        <taxon>Thermoanaerobacter</taxon>
    </lineage>
</organism>
<reference key="1">
    <citation type="submission" date="2008-01" db="EMBL/GenBank/DDBJ databases">
        <title>Complete sequence of Thermoanaerobacter sp. X514.</title>
        <authorList>
            <consortium name="US DOE Joint Genome Institute"/>
            <person name="Copeland A."/>
            <person name="Lucas S."/>
            <person name="Lapidus A."/>
            <person name="Barry K."/>
            <person name="Glavina del Rio T."/>
            <person name="Dalin E."/>
            <person name="Tice H."/>
            <person name="Pitluck S."/>
            <person name="Bruce D."/>
            <person name="Goodwin L."/>
            <person name="Saunders E."/>
            <person name="Brettin T."/>
            <person name="Detter J.C."/>
            <person name="Han C."/>
            <person name="Schmutz J."/>
            <person name="Larimer F."/>
            <person name="Land M."/>
            <person name="Hauser L."/>
            <person name="Kyrpides N."/>
            <person name="Kim E."/>
            <person name="Hemme C."/>
            <person name="Fields M.W."/>
            <person name="He Z."/>
            <person name="Zhou J."/>
            <person name="Richardson P."/>
        </authorList>
    </citation>
    <scope>NUCLEOTIDE SEQUENCE [LARGE SCALE GENOMIC DNA]</scope>
    <source>
        <strain>X514</strain>
    </source>
</reference>
<sequence>MIILSTNDNLTNPYEIARYIKEAKKSTPVRAYIQGNIEIEETEELEVYGCDNFKIVFGELDVVEKLIEANEDKIKHYRLEYDRRNSAIPLLDIKHLDARIEPGAIIRDKVKIGKNAVIMMGAVINIGAEIGENSMIDMNAVIGARGIIGKNVHVGAGAVIAGVLEPPSSVPVVLEDNVLVGANAVILEGVRVGHGAVVAAGSVVTEDVPPNTVVAGVPAKIVKIVDDKTREKTKLMEDLRG</sequence>
<gene>
    <name evidence="1" type="primary">dapH</name>
    <name type="ordered locus">Teth514_2186</name>
</gene>
<accession>B0K4I5</accession>
<feature type="chain" id="PRO_0000376724" description="2,3,4,5-tetrahydropyridine-2,6-dicarboxylate N-acetyltransferase">
    <location>
        <begin position="1"/>
        <end position="241"/>
    </location>
</feature>
<protein>
    <recommendedName>
        <fullName evidence="1">2,3,4,5-tetrahydropyridine-2,6-dicarboxylate N-acetyltransferase</fullName>
        <ecNumber evidence="1">2.3.1.89</ecNumber>
    </recommendedName>
    <alternativeName>
        <fullName evidence="1">Tetrahydrodipicolinate N-acetyltransferase</fullName>
        <shortName evidence="1">THP acetyltransferase</shortName>
        <shortName evidence="1">Tetrahydropicolinate acetylase</shortName>
    </alternativeName>
</protein>
<name>DAPH_THEPX</name>